<keyword id="KW-1185">Reference proteome</keyword>
<keyword id="KW-0687">Ribonucleoprotein</keyword>
<keyword id="KW-0689">Ribosomal protein</keyword>
<proteinExistence type="evidence at transcript level"/>
<sequence>EKVCADLVKGAKDKHLRVKGPVRIPTKVLHITTRKSPCGEGTNTWDRFEFRIHKRVIDLI</sequence>
<feature type="chain" id="PRO_0000146689" description="Small ribosomal subunit protein uS10">
    <location>
        <begin position="1" status="less than"/>
        <end position="60" status="greater than"/>
    </location>
</feature>
<feature type="non-terminal residue">
    <location>
        <position position="1"/>
    </location>
</feature>
<feature type="non-terminal residue">
    <location>
        <position position="60"/>
    </location>
</feature>
<accession>Q08068</accession>
<protein>
    <recommendedName>
        <fullName evidence="1">Small ribosomal subunit protein uS10</fullName>
    </recommendedName>
    <alternativeName>
        <fullName>40S ribosomal protein S20</fullName>
    </alternativeName>
    <alternativeName>
        <fullName>S22</fullName>
    </alternativeName>
</protein>
<evidence type="ECO:0000305" key="1"/>
<name>RS20_MAIZE</name>
<organism>
    <name type="scientific">Zea mays</name>
    <name type="common">Maize</name>
    <dbReference type="NCBI Taxonomy" id="4577"/>
    <lineage>
        <taxon>Eukaryota</taxon>
        <taxon>Viridiplantae</taxon>
        <taxon>Streptophyta</taxon>
        <taxon>Embryophyta</taxon>
        <taxon>Tracheophyta</taxon>
        <taxon>Spermatophyta</taxon>
        <taxon>Magnoliopsida</taxon>
        <taxon>Liliopsida</taxon>
        <taxon>Poales</taxon>
        <taxon>Poaceae</taxon>
        <taxon>PACMAD clade</taxon>
        <taxon>Panicoideae</taxon>
        <taxon>Andropogonodae</taxon>
        <taxon>Andropogoneae</taxon>
        <taxon>Tripsacinae</taxon>
        <taxon>Zea</taxon>
    </lineage>
</organism>
<gene>
    <name type="primary">RPS20</name>
</gene>
<reference key="1">
    <citation type="journal article" date="1993" name="Plant Physiol.">
        <title>Partial sequence analysis of 130 randomly selected maize cDNA clones.</title>
        <authorList>
            <person name="Keith C.S."/>
            <person name="Hoang D.O."/>
            <person name="Barrett B.M."/>
            <person name="Feigelman B."/>
            <person name="Nelson M.C."/>
            <person name="Thai H."/>
            <person name="Baysdorfer C."/>
        </authorList>
    </citation>
    <scope>NUCLEOTIDE SEQUENCE [MRNA]</scope>
</reference>
<dbReference type="EMBL" id="M95062">
    <property type="protein sequence ID" value="AAA18549.2"/>
    <property type="molecule type" value="mRNA"/>
</dbReference>
<dbReference type="PIR" id="T03646">
    <property type="entry name" value="T03646"/>
</dbReference>
<dbReference type="SMR" id="Q08068"/>
<dbReference type="STRING" id="4577.Q08068"/>
<dbReference type="PaxDb" id="4577-GRMZM2G067303_P02"/>
<dbReference type="MaizeGDB" id="25438"/>
<dbReference type="eggNOG" id="KOG0900">
    <property type="taxonomic scope" value="Eukaryota"/>
</dbReference>
<dbReference type="InParanoid" id="Q08068"/>
<dbReference type="Proteomes" id="UP000007305">
    <property type="component" value="Unplaced"/>
</dbReference>
<dbReference type="ExpressionAtlas" id="Q08068">
    <property type="expression patterns" value="baseline and differential"/>
</dbReference>
<dbReference type="GO" id="GO:0022627">
    <property type="term" value="C:cytosolic small ribosomal subunit"/>
    <property type="evidence" value="ECO:0000318"/>
    <property type="project" value="GO_Central"/>
</dbReference>
<dbReference type="GO" id="GO:0003735">
    <property type="term" value="F:structural constituent of ribosome"/>
    <property type="evidence" value="ECO:0000318"/>
    <property type="project" value="GO_Central"/>
</dbReference>
<dbReference type="GO" id="GO:0006412">
    <property type="term" value="P:translation"/>
    <property type="evidence" value="ECO:0007669"/>
    <property type="project" value="InterPro"/>
</dbReference>
<dbReference type="FunFam" id="3.30.70.600:FF:000024">
    <property type="entry name" value="40S ribosomal protein S20"/>
    <property type="match status" value="1"/>
</dbReference>
<dbReference type="Gene3D" id="3.30.70.600">
    <property type="entry name" value="Ribosomal protein S10 domain"/>
    <property type="match status" value="1"/>
</dbReference>
<dbReference type="InterPro" id="IPR001848">
    <property type="entry name" value="Ribosomal_uS10"/>
</dbReference>
<dbReference type="InterPro" id="IPR027486">
    <property type="entry name" value="Ribosomal_uS10_dom"/>
</dbReference>
<dbReference type="InterPro" id="IPR036838">
    <property type="entry name" value="Ribosomal_uS10_dom_sf"/>
</dbReference>
<dbReference type="PANTHER" id="PTHR11700">
    <property type="entry name" value="30S RIBOSOMAL PROTEIN S10 FAMILY MEMBER"/>
    <property type="match status" value="1"/>
</dbReference>
<dbReference type="Pfam" id="PF00338">
    <property type="entry name" value="Ribosomal_S10"/>
    <property type="match status" value="1"/>
</dbReference>
<dbReference type="PRINTS" id="PR00971">
    <property type="entry name" value="RIBOSOMALS10"/>
</dbReference>
<dbReference type="SMART" id="SM01403">
    <property type="entry name" value="Ribosomal_S10"/>
    <property type="match status" value="1"/>
</dbReference>
<dbReference type="SUPFAM" id="SSF54999">
    <property type="entry name" value="Ribosomal protein S10"/>
    <property type="match status" value="1"/>
</dbReference>
<comment type="similarity">
    <text evidence="1">Belongs to the universal ribosomal protein uS10 family.</text>
</comment>